<protein>
    <recommendedName>
        <fullName>Non-structural polyprotein p200</fullName>
        <shortName>p200</shortName>
    </recommendedName>
    <component>
        <recommendedName>
            <fullName>Protease/methyltransferase p150</fullName>
            <shortName>p150</shortName>
            <ecNumber evidence="13 23">3.4.22.-</ecNumber>
        </recommendedName>
    </component>
    <component>
        <recommendedName>
            <fullName>RNA-directed RNA polymerase p90</fullName>
            <shortName>p90</shortName>
            <ecNumber evidence="3 12">2.7.7.48</ecNumber>
            <ecNumber evidence="21">3.6.1.15</ecNumber>
            <ecNumber>3.6.4.13</ecNumber>
        </recommendedName>
    </component>
</protein>
<sequence length="2116" mass="230910">MEKLLDEVLAPGGPYNLTVGSWVRDHVRSIVEGAWEVRDVVTAAQKRAIVAVIPRPVFTQMQVSDHPALHAISRYTRRHWIEWGPKEALHVLIDPSPGLLREVARVERRWVALCLHRTARKLATALAETASEAWHADYVCALRGAPSGPFYVHPEDVPHGGRAVADRCLLYYTPMQMCELMRTIDATLLVAVDLWPVALAAHVGDDWDDLGIAWHLDHDGGCPADCRGAGAGPTPGYTRPCTTRIYQVLPDTAHPGRLYRCGPRLWTRDCAVAELSWEVAQHCGHQARVRAVRCTLPIRHVRSLQPSARVRLPDLVHLAEVGWWRWFSLPRPVFQRMLSYCKTLSPDAYYSERVFKFKNALSHSITLAGNVLQEGWKGTCAEEDALCAYVAFRAWQSNARLAGIMKSAKRCAADSLSVAGWLDTIWDAIKRFFGSVPLAERMEEWEQDAAVAAFDRGPLEDGGRHLDTVQPPKSPPRPEIAATWIVHAASADRHCACAPRCDVPRERPSAPAGPPDDEALIPPWLFAERRALRCREWDFEALRARADTAAAPAPLAPRPARYPTVLYRHPAHHGPWLTLDEPGGADAALVLCDPLGQPLRGPERHYAAGAHMCAQARGLQAFVRVVPPPERPWADGGARAWAKFFRGCAWAQRLLGEPAVMHLPYTDGDVPKLIALALRTLAQQGAALALSVRDLPRGTAFEANAVTAAVRAGPGQLAATSPPPGDPPPPRRARRSQRHSDARGTPPPAPVRDPPRPQPSPPAPPRVGDPVPPTTAEPADRARHAELEVVYEPSGPPTSTKADPDSDIVESYARAAGPVHLRVRDIMDPPPGCKVVVNAANEGLLAGSGVCGAIFANATAALAADCRRLAPCPIGEAVATPGHGCGYTHIIHAVAPRRPRDPAALEEGEALLERAYRSIVALAAARRWARVACPLLGAGVYGWSAAESLRAALAATRAEPAERVSLHICHPDRATLTHASVLVGAGLAARRVSPPPTEPLASCPAGDPGRPAQRSASPPATPLGDATAPEPRGCQGCELCRYTRVTNDRAYVNLWLERDRGATSWAMRIPEVVVYGPEHLATHFPLNHYSVLKPAEVRPPRGMCGSDMWRCRGWQGMPQVRCTPSNAHAALCRTGVPPRVSTRGGELDPNTCWLRAAANVAQAARACGAYTSAGCPKCAYGRALSEARTHEDFAALSQWWSASHADASPDGTGDPLDPLMETVGCACSRVWVGSEHEAPPDHLLVSLHRAPNGPWGVVLEVRARPEGGNPTGHFVCAVGGGPRRVSDRPHLWLAVPLSRGGGTCAATDEGLAQAYYDDLEVRRLGDDAMARAALASIQRPRKGPYNIRVWNMAAGAGKTTRILAAFTREDLYVCPTNALLHEIQAKLRARDIDIKNAATYERALTKPLAAYRRIYIDEAFTLGGEYCAFVASQTTAEVICVGDRDQCGPHYANNCRTPVPDRWPTGRSRHTWRFPDCWAARLRAGLDYDIEGERTGTFACNLWDGRQVDLHLAFSRETVRRLHEAGIRAYTVREAQGMSVGTACIHVGRDGTDVALALTRDLAIVSLTRASDALYLHELEDGLLRAAGLSAFLDAGALAELKEVPAGIDRVVAVEQAPPPLPPADGIPEAQDVPPFCPRTLEELVFGRAGHPHYADLNRVTEGEREVRYMRISRHLLNKNHTEMPGTERVLSAVCAVRRYRAGEDGSTLRTAVARQHPRPFRQIPPPRVTAGVAQEWRMTYLRERIDLTDVYTQMGVAARELTDRYTRRYPEIFAGMCTAQSLSVPAFLKATLKCVDAALGPRDTEDCHAAQGKAGLEIRAWAKEWVQVMSPHFRAIQKIIMRALRPQFLVAAGHTEPEVDAWWQAHYTTNAIEVDFTEFDMNQTLATRDVELEISAALLGLPCAEDYRALRAGSYCTLRELGSTETGCERTSGEPATLLHNTTVAMCMAMRMVPKGVRWAGIFQGDDMVIFLPEGARNAALKWTPAEVGLFGFHIPVKHVSTPTPSFCGHVGTAAGLFHDVMHQAIKVLCRRFDPDVLEEQQVALLDRLRGVYAALPDTVAANAAYYDYSAERVLAIVRELTAYARGRGLDHPATIGALEEIQTPYARANLHDAD</sequence>
<evidence type="ECO:0000250" key="1">
    <source>
        <dbReference type="UniProtKB" id="P13889"/>
    </source>
</evidence>
<evidence type="ECO:0000255" key="2">
    <source>
        <dbReference type="PROSITE-ProRule" id="PRU00490"/>
    </source>
</evidence>
<evidence type="ECO:0000255" key="3">
    <source>
        <dbReference type="PROSITE-ProRule" id="PRU00539"/>
    </source>
</evidence>
<evidence type="ECO:0000255" key="4">
    <source>
        <dbReference type="PROSITE-ProRule" id="PRU00990"/>
    </source>
</evidence>
<evidence type="ECO:0000255" key="5">
    <source>
        <dbReference type="PROSITE-ProRule" id="PRU01079"/>
    </source>
</evidence>
<evidence type="ECO:0000255" key="6">
    <source>
        <dbReference type="PROSITE-ProRule" id="PRU01237"/>
    </source>
</evidence>
<evidence type="ECO:0000256" key="7">
    <source>
        <dbReference type="SAM" id="MobiDB-lite"/>
    </source>
</evidence>
<evidence type="ECO:0000269" key="8">
    <source>
    </source>
</evidence>
<evidence type="ECO:0000269" key="9">
    <source>
    </source>
</evidence>
<evidence type="ECO:0000269" key="10">
    <source>
    </source>
</evidence>
<evidence type="ECO:0000269" key="11">
    <source>
    </source>
</evidence>
<evidence type="ECO:0000269" key="12">
    <source>
    </source>
</evidence>
<evidence type="ECO:0000269" key="13">
    <source>
    </source>
</evidence>
<evidence type="ECO:0000269" key="14">
    <source>
    </source>
</evidence>
<evidence type="ECO:0000269" key="15">
    <source>
    </source>
</evidence>
<evidence type="ECO:0000269" key="16">
    <source>
    </source>
</evidence>
<evidence type="ECO:0000269" key="17">
    <source>
    </source>
</evidence>
<evidence type="ECO:0000269" key="18">
    <source>
    </source>
</evidence>
<evidence type="ECO:0000269" key="19">
    <source>
    </source>
</evidence>
<evidence type="ECO:0000269" key="20">
    <source>
    </source>
</evidence>
<evidence type="ECO:0000269" key="21">
    <source>
    </source>
</evidence>
<evidence type="ECO:0000269" key="22">
    <source>
    </source>
</evidence>
<evidence type="ECO:0000269" key="23">
    <source>
    </source>
</evidence>
<evidence type="ECO:0000269" key="24">
    <source>
    </source>
</evidence>
<evidence type="ECO:0000269" key="25">
    <source>
    </source>
</evidence>
<evidence type="ECO:0000303" key="26">
    <source>
    </source>
</evidence>
<evidence type="ECO:0000305" key="27"/>
<evidence type="ECO:0000305" key="28">
    <source>
    </source>
</evidence>
<proteinExistence type="evidence at protein level"/>
<comment type="function">
    <molecule>Non-structural polyprotein p200</molecule>
    <text evidence="11 13">Probable principal replicase for the negative-strand DNA, which replicates the 40S (+) genomic RNA into (-) antigenomic RNA. It cannot replicate the (-) into (+) until cleaved into p150 and p90 mature proteins.</text>
</comment>
<comment type="function">
    <molecule>Protease/methyltransferase p150</molecule>
    <text evidence="9 11 13 17 23 28">Protease that cleaves the precursor polyprotein into two mature products (PubMed:10823845, PubMed:9557742). Together with RNA-directed RNA polymerase p90, replicates the 40S genomic and antigenomic RNA by recognizing replications specific signals. The heterodimer P150/p90 is probably the principal replicase for positive-strand genomic RNA and the 24S subgenomic RNA, which codes for structural proteins (PubMed:11289813, PubMed:12076835). Responsible for the mRNA-capping of the viral mRNAs. This function is necessary since all viral RNAs are synthesized in the cytoplasm, and host capping enzymes are restricted to the nucleus (Probable). Forms fibers late in the infection that may be involved in cell-to-cell spread of the virus RNA in the absence of virus particle formation (PubMed:20696450).</text>
</comment>
<comment type="function">
    <molecule>RNA-directed RNA polymerase p90</molecule>
    <text evidence="11 13 21">Together with protease/methyltransferase p150, replicates the 40S genomic and antigenomic RNA by recognizing replications specific signals. The heterodimer P150/p90 is probably the principal replicase for positive-strand genomic RNA and the 24S subgenomic RNA, which codes for structural proteins (PubMed:11289813, PubMed:12076835). A helicase activity is probably also present (PubMed:8599224).</text>
</comment>
<comment type="catalytic activity">
    <reaction evidence="3 12">
        <text>RNA(n) + a ribonucleoside 5'-triphosphate = RNA(n+1) + diphosphate</text>
        <dbReference type="Rhea" id="RHEA:21248"/>
        <dbReference type="Rhea" id="RHEA-COMP:14527"/>
        <dbReference type="Rhea" id="RHEA-COMP:17342"/>
        <dbReference type="ChEBI" id="CHEBI:33019"/>
        <dbReference type="ChEBI" id="CHEBI:61557"/>
        <dbReference type="ChEBI" id="CHEBI:140395"/>
        <dbReference type="EC" id="2.7.7.48"/>
    </reaction>
</comment>
<comment type="catalytic activity">
    <reaction evidence="21">
        <text>a ribonucleoside 5'-triphosphate + H2O = a ribonucleoside 5'-diphosphate + phosphate + H(+)</text>
        <dbReference type="Rhea" id="RHEA:23680"/>
        <dbReference type="ChEBI" id="CHEBI:15377"/>
        <dbReference type="ChEBI" id="CHEBI:15378"/>
        <dbReference type="ChEBI" id="CHEBI:43474"/>
        <dbReference type="ChEBI" id="CHEBI:57930"/>
        <dbReference type="ChEBI" id="CHEBI:61557"/>
        <dbReference type="EC" id="3.6.1.15"/>
    </reaction>
</comment>
<comment type="catalytic activity">
    <reaction>
        <text>ATP + H2O = ADP + phosphate + H(+)</text>
        <dbReference type="Rhea" id="RHEA:13065"/>
        <dbReference type="ChEBI" id="CHEBI:15377"/>
        <dbReference type="ChEBI" id="CHEBI:15378"/>
        <dbReference type="ChEBI" id="CHEBI:30616"/>
        <dbReference type="ChEBI" id="CHEBI:43474"/>
        <dbReference type="ChEBI" id="CHEBI:456216"/>
        <dbReference type="EC" id="3.6.4.13"/>
    </reaction>
</comment>
<comment type="cofactor">
    <cofactor evidence="6">
        <name>Zn(2+)</name>
        <dbReference type="ChEBI" id="CHEBI:29105"/>
    </cofactor>
    <text evidence="6 23">Zn(2+) is necessary for the protease activity. The protease can also function efficiently with Cd(2+) and Co(2+).</text>
</comment>
<comment type="subunit">
    <molecule>Protease/methyltransferase p150</molecule>
    <text evidence="16 18 19 20">Interacts with RNA-directed RNA polymerase p90 (PubMed:22491463). Interacts with host CALM1; this interaction is necessary for the protease activity and viral infectivity (PubMed:20086014). Interacts with host C1QBP (PubMed:22238231). Interacts with the capsid protein (PubMed:25056903).</text>
</comment>
<comment type="subunit">
    <molecule>RNA-directed RNA polymerase p90</molecule>
    <text evidence="8 19 24">Interacts with human RB1/retinoblastoma protein (PubMed:10073691, PubMed:9608663). Interacts with protease/methyltransferase p150 (PubMed:22491463).</text>
</comment>
<comment type="interaction">
    <interactant intactId="EBI-11478518">
        <id>PRO_0000041224</id>
    </interactant>
    <interactant intactId="EBI-4401082">
        <id>Q96BM9</id>
        <label>ARL8A</label>
    </interactant>
    <organismsDiffer>true</organismsDiffer>
    <experiments>2</experiments>
</comment>
<comment type="interaction">
    <interactant intactId="EBI-2568719">
        <id>PRO_0000041225</id>
    </interactant>
    <interactant intactId="EBI-491274">
        <id>P06400</id>
        <label>RB1</label>
    </interactant>
    <organismsDiffer>true</organismsDiffer>
    <experiments>3</experiments>
</comment>
<comment type="subcellular location">
    <molecule>Non-structural polyprotein p200</molecule>
    <subcellularLocation>
        <location evidence="15">Host membrane</location>
    </subcellularLocation>
    <subcellularLocation>
        <location evidence="19">Host cytoplasm</location>
        <location evidence="19">Host perinuclear region</location>
    </subcellularLocation>
    <subcellularLocation>
        <location evidence="15">Host cytoplasm</location>
    </subcellularLocation>
    <text evidence="15">Localizes to cytoplasmic foci at 24 hpi.</text>
</comment>
<comment type="subcellular location">
    <molecule>Protease/methyltransferase p150</molecule>
    <subcellularLocation>
        <location evidence="15 20">Host membrane</location>
    </subcellularLocation>
    <subcellularLocation>
        <location evidence="17 19">Host cytoplasm</location>
        <location evidence="17 19">Host perinuclear region</location>
    </subcellularLocation>
    <subcellularLocation>
        <location evidence="15 20">Host cytoplasm</location>
    </subcellularLocation>
    <text evidence="1 20">At 36 hpi, localizes to the host cytoplasm, probably in vesicles inside host vacuoles of endosomal and lysosomal origin (By similarity). At 72 hpi, localizes to filamentous structures in the host cytoplasm (PubMed:25056903).</text>
</comment>
<comment type="subcellular location">
    <molecule>RNA-directed RNA polymerase p90</molecule>
    <subcellularLocation>
        <location evidence="15">Host membrane</location>
    </subcellularLocation>
    <subcellularLocation>
        <location evidence="15">Host cytoplasm</location>
    </subcellularLocation>
    <text evidence="15">Localizes to the cytoplasm and to the cytoplasmic fibers formed by protease/methyltransferase p150.</text>
</comment>
<comment type="domain">
    <molecule>Protease/methyltransferase p150</molecule>
    <text evidence="9 14 15 18">The N-terminus has a methyltransferase activity for mRNA-capping. The C-terminus harbors a protease active in cis or in trans which specifically cleaves and releases the two mature proteins (PubMed:10823845). Both the N-terminus and C-terminus are required for fiber formation. The N-terminus is involved in associating with membranes (PubMed:19539969). An EF-hand Ca(2+)-binding motif is present in the protease (PubMed:17475644). Also contains 3 SH3-binding motifs that are responsible for the interaction with host C1QBP (PubMed:22238231).</text>
</comment>
<comment type="PTM">
    <molecule>Non-structural polyprotein p200</molecule>
    <text evidence="9 11 13 22 23 25">Specific enzymatic cleavage by its own cysteine protease yield mature proteins p150 and p90.</text>
</comment>
<comment type="miscellaneous">
    <text evidence="26 27">Rubella virus in utero infection has frequently severe consequences on normal fetal development, collectively known as congenital rubella syndrome (CRS) (Probable). The teratogenicity of the virus is possibly due to the interaction between the p90 protein and the human RB1/retinoblastoma protein (PubMed:9608663).</text>
</comment>
<comment type="sequence caution" evidence="27">
    <conflict type="frameshift">
        <sequence resource="EMBL-CDS" id="CAA51087"/>
    </conflict>
</comment>
<organism>
    <name type="scientific">Rubella virus (strain M33)</name>
    <name type="common">RUBV</name>
    <dbReference type="NCBI Taxonomy" id="11043"/>
    <lineage>
        <taxon>Viruses</taxon>
        <taxon>Riboviria</taxon>
        <taxon>Orthornavirae</taxon>
        <taxon>Kitrinoviricota</taxon>
        <taxon>Alsuviricetes</taxon>
        <taxon>Hepelivirales</taxon>
        <taxon>Matonaviridae</taxon>
        <taxon>Rubivirus</taxon>
        <taxon>Rubivirus rubellae</taxon>
    </lineage>
</organism>
<name>POLN_RUBVM</name>
<keyword id="KW-0067">ATP-binding</keyword>
<keyword id="KW-0106">Calcium</keyword>
<keyword id="KW-0347">Helicase</keyword>
<keyword id="KW-1035">Host cytoplasm</keyword>
<keyword id="KW-1043">Host membrane</keyword>
<keyword id="KW-0378">Hydrolase</keyword>
<keyword id="KW-0472">Membrane</keyword>
<keyword id="KW-0479">Metal-binding</keyword>
<keyword id="KW-0547">Nucleotide-binding</keyword>
<keyword id="KW-0548">Nucleotidyltransferase</keyword>
<keyword id="KW-0645">Protease</keyword>
<keyword id="KW-0696">RNA-directed RNA polymerase</keyword>
<keyword id="KW-0788">Thiol protease</keyword>
<keyword id="KW-0808">Transferase</keyword>
<keyword id="KW-0693">Viral RNA replication</keyword>
<keyword id="KW-0862">Zinc</keyword>
<feature type="chain" id="PRO_0000249224" description="Non-structural polyprotein p200">
    <location>
        <begin position="1"/>
        <end position="2116"/>
    </location>
</feature>
<feature type="chain" id="PRO_0000041224" description="Protease/methyltransferase p150">
    <location>
        <begin position="1"/>
        <end position="1301"/>
    </location>
</feature>
<feature type="chain" id="PRO_0000041225" description="RNA-directed RNA polymerase p90">
    <location>
        <begin position="1302"/>
        <end position="2116"/>
    </location>
</feature>
<feature type="domain" description="Alphavirus-like MT" evidence="5">
    <location>
        <begin position="57"/>
        <end position="247"/>
    </location>
</feature>
<feature type="domain" description="Macro" evidence="2">
    <location>
        <begin position="806"/>
        <end position="985"/>
    </location>
</feature>
<feature type="domain" description="Peptidase C27" evidence="6">
    <location>
        <begin position="1000"/>
        <end position="1301"/>
    </location>
</feature>
<feature type="domain" description="(+)RNA virus helicase ATP-binding" evidence="4">
    <location>
        <begin position="1320"/>
        <end position="1468"/>
    </location>
</feature>
<feature type="domain" description="(+)RNA virus helicase C-terminal" evidence="4">
    <location>
        <begin position="1469"/>
        <end position="1609"/>
    </location>
</feature>
<feature type="domain" description="RdRp catalytic" evidence="3">
    <location>
        <begin position="1870"/>
        <end position="1981"/>
    </location>
</feature>
<feature type="region of interest" description="Required for efficient proteolysis and P150-P90 interaction">
    <location>
        <begin position="36"/>
        <end position="49"/>
    </location>
</feature>
<feature type="region of interest" description="Disordered" evidence="7">
    <location>
        <begin position="715"/>
        <end position="779"/>
    </location>
</feature>
<feature type="region of interest" description="Disordered" evidence="7">
    <location>
        <begin position="992"/>
        <end position="1031"/>
    </location>
</feature>
<feature type="region of interest" description="Interaction with host CALM1" evidence="6 16">
    <location>
        <begin position="1152"/>
        <end position="1183"/>
    </location>
</feature>
<feature type="region of interest" description="EF-hand-like" evidence="6 14">
    <location>
        <begin position="1193"/>
        <end position="1228"/>
    </location>
</feature>
<feature type="region of interest" description="Involved in P150-P90 interaction" evidence="17 19">
    <location>
        <begin position="1700"/>
        <end position="1900"/>
    </location>
</feature>
<feature type="short sequence motif" description="PxxPxR; class II SH3-binding" evidence="18">
    <location>
        <begin position="727"/>
        <end position="732"/>
    </location>
</feature>
<feature type="short sequence motif" description="PxxPxR; class II SH3-binding" evidence="18">
    <location>
        <begin position="747"/>
        <end position="752"/>
    </location>
</feature>
<feature type="short sequence motif" description="PxxPxR; class II SH3-binding" evidence="18">
    <location>
        <begin position="761"/>
        <end position="766"/>
    </location>
</feature>
<feature type="short sequence motif" description="Human RB1 binding" evidence="8">
    <location>
        <begin position="1902"/>
        <end position="1906"/>
    </location>
</feature>
<feature type="compositionally biased region" description="Pro residues" evidence="7">
    <location>
        <begin position="721"/>
        <end position="730"/>
    </location>
</feature>
<feature type="compositionally biased region" description="Pro residues" evidence="7">
    <location>
        <begin position="745"/>
        <end position="775"/>
    </location>
</feature>
<feature type="active site" description="For cysteine protease activity" evidence="6 25">
    <location>
        <position position="1152"/>
    </location>
</feature>
<feature type="active site" description="For cysteine protease activity" evidence="6 22">
    <location>
        <position position="1273"/>
    </location>
</feature>
<feature type="binding site" evidence="6 10">
    <location>
        <position position="1175"/>
    </location>
    <ligand>
        <name>Zn(2+)</name>
        <dbReference type="ChEBI" id="CHEBI:29105"/>
    </ligand>
</feature>
<feature type="binding site" evidence="6 10">
    <location>
        <position position="1178"/>
    </location>
    <ligand>
        <name>Zn(2+)</name>
        <dbReference type="ChEBI" id="CHEBI:29105"/>
    </ligand>
</feature>
<feature type="binding site" evidence="6 10">
    <location>
        <position position="1227"/>
    </location>
    <ligand>
        <name>Zn(2+)</name>
        <dbReference type="ChEBI" id="CHEBI:29105"/>
    </ligand>
</feature>
<feature type="binding site" evidence="6 10">
    <location>
        <position position="1273"/>
    </location>
    <ligand>
        <name>Zn(2+)</name>
        <dbReference type="ChEBI" id="CHEBI:29105"/>
    </ligand>
</feature>
<feature type="binding site" evidence="4">
    <location>
        <begin position="1352"/>
        <end position="1359"/>
    </location>
    <ligand>
        <name>a ribonucleoside 5'-triphosphate</name>
        <dbReference type="ChEBI" id="CHEBI:61557"/>
    </ligand>
</feature>
<feature type="site" description="Cleavage; autocatalytic" evidence="6 22 25">
    <location>
        <begin position="1301"/>
        <end position="1302"/>
    </location>
</feature>
<feature type="mutagenesis site" description="Loss of P150-P90 interaction. No effect on processing efficiency or fiber formation." evidence="17 19">
    <original>E</original>
    <variation>A</variation>
    <location>
        <position position="36"/>
    </location>
</feature>
<feature type="mutagenesis site" description="No effect on P150-P90 interaction. No effect on processing efficiency or fiber formation." evidence="17 19">
    <original>R</original>
    <variation>A</variation>
    <location>
        <position position="38"/>
    </location>
</feature>
<feature type="mutagenesis site" description="No effect on P150-P90 interaction. No effect on processing efficiency or fiber formation." evidence="17 19">
    <original>D</original>
    <variation>A</variation>
    <location>
        <position position="39"/>
    </location>
</feature>
<feature type="mutagenesis site" description="Slight loss of P150-P90 interaction. No effect on processing efficiency or fiber formation." evidence="17 19">
    <original>T</original>
    <variation>A</variation>
    <location>
        <position position="42"/>
    </location>
</feature>
<feature type="mutagenesis site" description="Slight loss of P150-P90 interaction. No effect on processing efficiency or fiber formation." evidence="17 19">
    <original>Q</original>
    <variation>A</variation>
    <location>
        <position position="45"/>
    </location>
</feature>
<feature type="mutagenesis site" description="No effect on P150-P90 interaction. Inhibits fiber formation by p150." evidence="17 19">
    <original>K</original>
    <variation>A</variation>
    <location>
        <position position="46"/>
    </location>
</feature>
<feature type="mutagenesis site" description="No effect on P150-P90 interaction. No effect on processing efficiency or fiber formation." evidence="17 19">
    <original>R</original>
    <variation>A</variation>
    <location>
        <position position="47"/>
    </location>
</feature>
<feature type="mutagenesis site" description="Loss of P150-P90 interaction. No effect on processing efficiency or fiber formation." evidence="17 19">
    <original>I</original>
    <variation>A</variation>
    <location>
        <position position="49"/>
    </location>
</feature>
<feature type="mutagenesis site" description="Complete loss of interaction with host C1QBP; when associated with Ala-747 and Ala-749." evidence="18">
    <original>PPPP</original>
    <variation>APPA</variation>
    <location>
        <begin position="727"/>
        <end position="730"/>
    </location>
</feature>
<feature type="mutagenesis site" description="Complete loss of interaction with host C1QBP; when associated with Ala-727 and Ala-729." evidence="18">
    <original>PPAP</original>
    <variation>APAA</variation>
    <location>
        <begin position="747"/>
        <end position="750"/>
    </location>
</feature>
<feature type="mutagenesis site" description="Complete loss of protease activity." evidence="25">
    <original>C</original>
    <variation>S</variation>
    <location>
        <position position="1152"/>
    </location>
</feature>
<feature type="mutagenesis site" description="No effect on Zn(2+) binding; complete loss of protease activity." evidence="10">
    <original>C</original>
    <variation>S</variation>
    <location>
        <position position="1152"/>
    </location>
</feature>
<feature type="mutagenesis site" description="Complete loss of interaction of p150 with host CALM1." evidence="16">
    <original>R</original>
    <variation>D</variation>
    <location>
        <position position="1165"/>
    </location>
</feature>
<feature type="mutagenesis site" description="Decreased interaction of p150 with host CALM1." evidence="16">
    <original>R</original>
    <variation>Q</variation>
    <location>
        <position position="1165"/>
    </location>
</feature>
<feature type="mutagenesis site" description="No effect on Zn(2+) binding; complete loss of protease activity." evidence="10">
    <original>C</original>
    <variation>S</variation>
    <location>
        <position position="1167"/>
    </location>
</feature>
<feature type="mutagenesis site" description="Complete loss of Zn(2+) binding and protease activity." evidence="10">
    <original>C</original>
    <variation>S</variation>
    <location>
        <position position="1175"/>
    </location>
</feature>
<feature type="mutagenesis site" description="Complete loss of Zn(2+) binding and protease activity." evidence="10">
    <original>C</original>
    <variation>S</variation>
    <location>
        <position position="1178"/>
    </location>
</feature>
<feature type="mutagenesis site" description="No effect on Zn(2+) binding and protease activity." evidence="10">
    <original>H</original>
    <variation>L</variation>
    <location>
        <position position="1190"/>
    </location>
</feature>
<feature type="mutagenesis site" description="No effect on Zn(2+) binding; complete loss of protease activity." evidence="10">
    <original>H</original>
    <variation>L</variation>
    <location>
        <position position="1204"/>
    </location>
</feature>
<feature type="mutagenesis site" description="20 fold decreased infectivity. Loss of Ca(2+) binding." evidence="14">
    <original>D</original>
    <variation>A</variation>
    <location>
        <position position="1210"/>
    </location>
</feature>
<feature type="mutagenesis site" description="20 fold decreased infectivity. Loss of Ca(2+) binding." evidence="14">
    <original>D</original>
    <variation>A</variation>
    <location>
        <position position="1217"/>
    </location>
</feature>
<feature type="mutagenesis site" description="No effect on Zn(2+) binding and protease activity." evidence="10">
    <original>C</original>
    <variation>S</variation>
    <location>
        <position position="1225"/>
    </location>
</feature>
<feature type="mutagenesis site" description="Complete loss of Zn(2+) binding and protease activity." evidence="10">
    <original>C</original>
    <variation>S</variation>
    <location>
        <position position="1227"/>
    </location>
</feature>
<feature type="mutagenesis site" description="No effect on protease activity." evidence="10">
    <original>H</original>
    <variation>S</variation>
    <location>
        <position position="1236"/>
    </location>
</feature>
<feature type="mutagenesis site" description="No effect on protease activity." evidence="22">
    <original>H</original>
    <variation>L</variation>
    <location>
        <position position="1248"/>
    </location>
</feature>
<feature type="mutagenesis site" description="Complete loss of protease activity." evidence="22">
    <original>H</original>
    <variation>L</variation>
    <location>
        <position position="1273"/>
    </location>
</feature>
<feature type="mutagenesis site" description="Complete loss of Zn(2+) binding and protease activity." evidence="10">
    <original>H</original>
    <variation>S</variation>
    <location>
        <position position="1273"/>
    </location>
</feature>
<feature type="mutagenesis site" description="No effect on protease activity." evidence="22">
    <original>H</original>
    <variation>L</variation>
    <location>
        <position position="1290"/>
    </location>
</feature>
<feature type="mutagenesis site" description="Partial loss of proteolytic cleavage of non-structural polyprotein p200." evidence="22">
    <original>G</original>
    <variation>A</variation>
    <location>
        <position position="1300"/>
    </location>
</feature>
<feature type="mutagenesis site" description="Complete loss of polyprotein cleavage." evidence="25">
    <original>G</original>
    <variation>S</variation>
    <location>
        <position position="1300"/>
    </location>
</feature>
<feature type="mutagenesis site" description="Complete loss of proteolytic cleavage of non-structural polyprotein p200." evidence="22">
    <original>G</original>
    <variation>V</variation>
    <location>
        <position position="1300"/>
    </location>
</feature>
<feature type="mutagenesis site" description="Almost complete loss of proteolytic cleavage of non-structural polyprotein p200." evidence="22">
    <original>G</original>
    <variation>A</variation>
    <location>
        <position position="1301"/>
    </location>
</feature>
<feature type="mutagenesis site" description="Complete loss of proteolytic cleavage of non-structural polyprotein p200." evidence="22">
    <original>G</original>
    <variation>V</variation>
    <location>
        <position position="1301"/>
    </location>
</feature>
<feature type="mutagenesis site" description="Partial loss of proteolytic cleavage of non-structural polyprotein p200." evidence="22">
    <original>G</original>
    <variation>A</variation>
    <location>
        <position position="1302"/>
    </location>
</feature>
<feature type="mutagenesis site" description="Complete loss of proteolytic cleavage of non-structural polyprotein p200." evidence="22">
    <original>G</original>
    <variation>V</variation>
    <location>
        <position position="1302"/>
    </location>
</feature>
<feature type="mutagenesis site" description="No effect on proteolytic cleavage of non-structural polyprotein p200." evidence="22">
    <original>Y</original>
    <variation>M</variation>
    <location>
        <position position="1316"/>
    </location>
</feature>
<feature type="mutagenesis site" description="Partial loss of human RB1 binding and 47% loss of virus replication." evidence="8">
    <original>C</original>
    <variation>G</variation>
    <location>
        <position position="1904"/>
    </location>
</feature>
<feature type="mutagenesis site" description="Complete loss of human RB1 binding and virus replication." evidence="8">
    <original>C</original>
    <variation>R</variation>
    <location>
        <position position="1904"/>
    </location>
</feature>
<feature type="mutagenesis site" description="Reduces virus infectivity." evidence="12">
    <original>G</original>
    <variation>A</variation>
    <location>
        <position position="1966"/>
    </location>
</feature>
<feature type="mutagenesis site" description="Complete loss of virus replication." evidence="12">
    <original>D</original>
    <variation>A</variation>
    <location>
        <position position="1967"/>
    </location>
</feature>
<feature type="mutagenesis site" description="Complete loss of virus replication." evidence="12">
    <original>D</original>
    <variation>A</variation>
    <location>
        <position position="1968"/>
    </location>
</feature>
<organismHost>
    <name type="scientific">Homo sapiens</name>
    <name type="common">Human</name>
    <dbReference type="NCBI Taxonomy" id="9606"/>
</organismHost>
<reference key="1">
    <citation type="journal article" date="1998" name="Virology">
        <title>Proteolytic processing of rubella virus nonstructural proteins.</title>
        <authorList>
            <person name="Yao J."/>
            <person name="Yang D."/>
            <person name="Chong P."/>
            <person name="Hwang D."/>
            <person name="Liang Y."/>
            <person name="Gillam S."/>
        </authorList>
    </citation>
    <scope>NUCLEOTIDE SEQUENCE [GENOMIC RNA]</scope>
    <scope>MUTAGENESIS OF CYS-1152 AND GLY-1300</scope>
    <scope>PROTEOLYTIC CLEAVAGE (NON-STRUCTURAL POLYPROTEIN P200)</scope>
    <scope>ACTIVE SITE</scope>
</reference>
<reference key="2">
    <citation type="journal article" date="1992" name="Proc. Natl. Acad. Sci. U.S.A.">
        <title>Computer-assisted assignment of functional domains in the nonstructural polyprotein of hepatitis E virus: delineation of an additional group of positive-strand RNA plant and animal viruses.</title>
        <authorList>
            <person name="Koonin E.V."/>
            <person name="Gorbalenya A.E."/>
            <person name="Purdy M.A."/>
            <person name="Rozanov M.N."/>
            <person name="Reyes G.R."/>
            <person name="Bradley D.W."/>
        </authorList>
    </citation>
    <scope>FUNCTION (PROTEASE/METHYLTRANSFERASE P150)</scope>
</reference>
<reference key="3">
    <citation type="journal article" date="1996" name="J. Virol.">
        <title>Characterization of the rubella virus nonstructural protease domain and its cleavage site.</title>
        <authorList>
            <person name="Chen J.P."/>
            <person name="Strauss J.H."/>
            <person name="Strauss E.G."/>
            <person name="Frey T.K."/>
        </authorList>
    </citation>
    <scope>ACTIVE SITE</scope>
    <scope>PROTEOLYTIC CLEAVAGE (NON-STRUCTURAL POLYPROTEIN P200)</scope>
    <scope>MUTAGENESIS OF HIS-1248; HIS-1273; HIS-1290; GLY-1300; GLY-1301; GLY-1302 AND TYR-1316</scope>
</reference>
<reference key="4">
    <citation type="journal article" date="1996" name="Virology">
        <title>Identification of an RNA-stimulated NTPase in the predicted helicase sequence of the Rubella virus nonstructural polyprotein.</title>
        <authorList>
            <person name="Gros C."/>
            <person name="Wengler G."/>
        </authorList>
    </citation>
    <scope>CATALYTIC ACTIVITY (RNA-DIRECTED RNA POLYMERASE P90)</scope>
    <scope>FUNCTION (RNA-DIRECTED RNA POLYMERASE P90)</scope>
</reference>
<reference key="5">
    <citation type="journal article" date="1998" name="Virus Genes">
        <title>The rubella virus putative replicase interacts with the retinoblastoma tumor suppressor protein.</title>
        <authorList>
            <person name="Atreya C.D."/>
            <person name="Lee N.S."/>
            <person name="Forng R.Y."/>
            <person name="Hofmann J."/>
            <person name="Washington G."/>
            <person name="Marti G."/>
            <person name="Nakhasi H.L."/>
        </authorList>
    </citation>
    <scope>INTERACTION WITH HUMAN RB1 (RNA-DIRECTED RNA POLYMERASE P90)</scope>
</reference>
<reference key="6">
    <citation type="journal article" date="1998" name="J. Virol.">
        <title>The rubella virus nonstructural protease requires divalent cations for activity and functions in trans.</title>
        <authorList>
            <person name="Liu X."/>
            <person name="Ropp S.L."/>
            <person name="Jackson R.J."/>
            <person name="Frey T.K."/>
        </authorList>
    </citation>
    <scope>FUNCTION (PROTEASE/METHYLTRANSFERASE P150)</scope>
    <scope>COFACTOR</scope>
    <scope>PROTEOLYTIC CLEAVAGE (NON-STRUCTURAL POLYPROTEIN P200)</scope>
    <scope>CATALYTIC ACTIVITY (PROTEASE/METHYLTRANSFERASE P150)</scope>
</reference>
<reference key="7">
    <citation type="journal article" date="1999" name="J. Gen. Virol.">
        <title>Mutations in the retinoblastoma protein-binding LXCXE motif of rubella virus putative replicase affect virus replication.</title>
        <authorList>
            <person name="Forng R.Y."/>
            <person name="Atreya C.D."/>
        </authorList>
    </citation>
    <scope>MUTAGENESIS OF CYS-1904</scope>
    <scope>INTERACTION WITH HUMAN RB1 (RNA-DIRECTED RNA POLYMERASE P90)</scope>
</reference>
<reference key="8">
    <citation type="journal article" date="2000" name="J. Virol.">
        <title>Characterization of the zinc binding activity of the rubella virus nonstructural protease.</title>
        <authorList>
            <person name="Liu X."/>
            <person name="Yang J."/>
            <person name="Ghazi A.M."/>
            <person name="Frey T.K."/>
        </authorList>
    </citation>
    <scope>ZINC-BINDING (PROTEASE/METHYLTRANSFERASE P150)</scope>
    <scope>MUTAGENESIS OF CYS-1152; CYS-1167; CYS-1175; CYS-1178; HIS-1190; HIS-1204; CYS-1225; CYS-1227; HIS-1236 AND HIS-1273</scope>
</reference>
<reference key="9">
    <citation type="journal article" date="2000" name="J. Virol.">
        <title>Rubella virus nonstructural protein protease domains involved in trans- and cis-cleavage activities.</title>
        <authorList>
            <person name="Liang Y."/>
            <person name="Yao J."/>
            <person name="Gillam S."/>
        </authorList>
    </citation>
    <scope>FUNCTION (PROTEASE/METHYLTRANSFERASE P150)</scope>
    <scope>DOMAIN (PROTEASE/METHYLTRANSFERASE P150)</scope>
    <scope>PROTEOLYTIC CLEAVAGE (NON-STRUCTURAL POLYPROTEIN P200)</scope>
</reference>
<reference key="10">
    <citation type="journal article" date="2001" name="Virology">
        <title>Mutations in the GDD motif of rubella virus putative RNA-dependent RNA polymerase affect virus replication.</title>
        <authorList>
            <person name="Wang X."/>
            <person name="Gillam S."/>
        </authorList>
    </citation>
    <scope>MUTAGENESIS OF GLY-1966; ASP-1967 AND ASP-1968</scope>
    <scope>CATALYTIC ACTIVITY (RNA-DIRECTED RNA POLYMERASE P90)</scope>
</reference>
<reference key="11">
    <citation type="journal article" date="2001" name="Virology">
        <title>Rubella virus RNA replication is cis-preferential and synthesis of negative- and positive-strand RNAs is regulated by the processing of nonstructural protein.</title>
        <authorList>
            <person name="Liang Y."/>
            <person name="Gillam S."/>
        </authorList>
    </citation>
    <scope>FUNCTION (NON-STRUCTURAL POLYPROTEIN P200)</scope>
    <scope>PROTEOLYTIC CLEAVAGE (NON-STRUCTURAL POLYPROTEIN P200)</scope>
    <scope>FUNCTION (PROTEASE/METHYLTRANSFERASE P150)</scope>
    <scope>FUNCTION (RNA-DIRECTED RNA POLYMERASE P90)</scope>
</reference>
<reference key="12">
    <citation type="journal article" date="2002" name="Virus Res.">
        <title>Rescue of rubella virus replication-defective mutants using vaccinia virus recombinant expressing rubella virus nonstructural proteins.</title>
        <authorList>
            <person name="Wang X."/>
            <person name="Liang Y."/>
            <person name="Gillam S."/>
        </authorList>
    </citation>
    <scope>FUNCTION (NON-STRUCTURAL POLYPROTEIN P200)</scope>
    <scope>FUNCTION (PROTEASE/METHYLTRANSFERASE P150)</scope>
    <scope>FUNCTION (RNA-DIRECTED RNA POLYMERASE P90)</scope>
    <scope>PROTEOLYTIC CLEAVAGE (NON-STRUCTURAL POLYPROTEIN P200)</scope>
    <scope>CATALYTIC ACTIVITY (PROTEASE/METHYLTRANSFERASE P150)</scope>
</reference>
<reference key="13">
    <citation type="journal article" date="2007" name="J. Virol.">
        <title>Identification of a Ca2+-binding domain in the rubella virus nonstructural protease.</title>
        <authorList>
            <person name="Zhou Y."/>
            <person name="Tzeng W.P."/>
            <person name="Yang W."/>
            <person name="Zhou Y."/>
            <person name="Ye Y."/>
            <person name="Lee H.W."/>
            <person name="Frey T.K."/>
            <person name="Yang J."/>
        </authorList>
    </citation>
    <scope>DOMAIN (PROTEASE/METHYLTRANSFERASE P150)</scope>
    <scope>MUTAGENESIS OF ASP-1210 AND ASP-1217</scope>
</reference>
<reference key="14">
    <citation type="journal article" date="2009" name="Virology">
        <title>Determinants of subcellular localization of the rubella virus nonstructural replicase proteins.</title>
        <authorList>
            <person name="Matthews J.D."/>
            <person name="Tzeng W.P."/>
            <person name="Frey T.K."/>
        </authorList>
    </citation>
    <scope>SUBCELLULAR LOCATION (PROTEASE/METHYLTRANSFERASE P150)</scope>
    <scope>DOMAIN (PROTEASE/METHYLTRANSFERASE P150)</scope>
    <scope>SUBCELLULAR LOCATION (RNA-DIRECTED RNA POLYMERASE P90)</scope>
</reference>
<reference key="15">
    <citation type="journal article" date="2010" name="J. Biol. Chem.">
        <title>Calcium-dependent association of calmodulin with the rubella virus nonstructural protease domain.</title>
        <authorList>
            <person name="Zhou Y."/>
            <person name="Tzeng W.P."/>
            <person name="Wong H.C."/>
            <person name="Ye Y."/>
            <person name="Jiang J."/>
            <person name="Chen Y."/>
            <person name="Huang Y."/>
            <person name="Suppiah S."/>
            <person name="Frey T.K."/>
            <person name="Yang J.J."/>
        </authorList>
    </citation>
    <scope>INTERACTION WITH HOST CALM1 (PROTEASE/METHYLTRANSFERASE P150)</scope>
    <scope>MUTAGENESIS OF ARG-1165</scope>
</reference>
<reference key="16">
    <citation type="journal article" date="2010" name="Virology">
        <title>Analysis of the function of cytoplasmic fibers formed by the rubella virus nonstructural replicase proteins.</title>
        <authorList>
            <person name="Matthews J.D."/>
            <person name="Tzeng W.P."/>
            <person name="Frey T.K."/>
        </authorList>
    </citation>
    <scope>FUNCTION (PROTEASE/METHYLTRANSFERASE P150)</scope>
    <scope>SUBCELLULAR LOCATION (PROTEASE/METHYLTRANSFERASE P150)</scope>
    <scope>MUTAGENESIS OF GLU-36; ARG-38; ASP-39; THR-42; GLN-45; LYS-46; ARG-47 AND ILE-49</scope>
</reference>
<reference key="17">
    <citation type="journal article" date="2012" name="J. Virol.">
        <title>Determinants in the maturation of rubella virus p200 replicase polyprotein precursor.</title>
        <authorList>
            <person name="Matthews J.D."/>
            <person name="Tzeng W.P."/>
            <person name="Frey T.K."/>
        </authorList>
    </citation>
    <scope>INTERACTION WITH RNA-DIRECTED RNA POLYMERASE P90 (PROTEASE/METHYLTRANSFERASE P150)</scope>
    <scope>INTERACTION WITH PROTEASE/METHYLTRANSFERASE P150 (RNA-DIRECTED RNA POLYMERASE P90)</scope>
    <scope>MUTAGENESIS OF GLU-36; ARG-38; ASP-39; THR-42; GLN-45; LYS-46; ARG-47 AND ILE-49</scope>
    <scope>SUBCELLULAR LOCATION (NON-STRUCTURAL POLYPROTEIN P200)</scope>
</reference>
<reference key="18">
    <citation type="journal article" date="2012" name="J. Gen. Virol.">
        <title>Binding of cellular p32 protein to the rubella virus P150 replicase protein via PxxPxR motifs.</title>
        <authorList>
            <person name="Suppiah S."/>
            <person name="Mousa H.A."/>
            <person name="Tzeng W.P."/>
            <person name="Matthews J.D."/>
            <person name="Frey T.K."/>
        </authorList>
    </citation>
    <scope>INTERACTION WITH HOST C1QBP (ROTEASE/METHYLTRANSFERASE P150)</scope>
    <scope>DOMAIN (ROTEASE/METHYLTRANSFERASE P150)</scope>
    <scope>MUTAGENESIS OF 727-PRO--PRO-730 AND 747-PRO--PRO-750</scope>
</reference>
<reference key="19">
    <citation type="journal article" date="2014" name="J. Virol.">
        <title>Short self-interacting N-terminal region of rubella virus capsid protein is essential for cooperative actions of capsid and nonstructural p150 proteins.</title>
        <authorList>
            <person name="Sakata M."/>
            <person name="Otsuki N."/>
            <person name="Okamoto K."/>
            <person name="Anraku M."/>
            <person name="Nagai M."/>
            <person name="Takeda M."/>
            <person name="Mori Y."/>
        </authorList>
    </citation>
    <scope>INTERACTION WITH THE CAPSID PROTEIN (PROTEASE/METHYLTRANSFERASE P150)</scope>
    <scope>SUBCELLULAR LOCATION (PROTEASE/METHYLTRANSFERASE P150)</scope>
    <source>
        <strain>RVi/Japan/Hiroshima/2003</strain>
    </source>
</reference>
<accession>Q86500</accession>
<dbReference type="EC" id="3.4.22.-" evidence="13 23"/>
<dbReference type="EC" id="2.7.7.48" evidence="3 12"/>
<dbReference type="EC" id="3.6.1.15" evidence="21"/>
<dbReference type="EC" id="3.6.4.13"/>
<dbReference type="EMBL" id="X72393">
    <property type="protein sequence ID" value="CAA51087.1"/>
    <property type="status" value="ALT_SEQ"/>
    <property type="molecule type" value="Genomic_RNA"/>
</dbReference>
<dbReference type="PIR" id="S38480">
    <property type="entry name" value="S38480"/>
</dbReference>
<dbReference type="SMR" id="Q86500"/>
<dbReference type="IntAct" id="Q86500">
    <property type="interactions" value="23"/>
</dbReference>
<dbReference type="MEROPS" id="C27.001"/>
<dbReference type="Proteomes" id="UP000007143">
    <property type="component" value="Genome"/>
</dbReference>
<dbReference type="GO" id="GO:0033644">
    <property type="term" value="C:host cell membrane"/>
    <property type="evidence" value="ECO:0007669"/>
    <property type="project" value="UniProtKB-SubCell"/>
</dbReference>
<dbReference type="GO" id="GO:0044220">
    <property type="term" value="C:host cell perinuclear region of cytoplasm"/>
    <property type="evidence" value="ECO:0007669"/>
    <property type="project" value="UniProtKB-SubCell"/>
</dbReference>
<dbReference type="GO" id="GO:0016020">
    <property type="term" value="C:membrane"/>
    <property type="evidence" value="ECO:0007669"/>
    <property type="project" value="UniProtKB-KW"/>
</dbReference>
<dbReference type="GO" id="GO:0005524">
    <property type="term" value="F:ATP binding"/>
    <property type="evidence" value="ECO:0007669"/>
    <property type="project" value="UniProtKB-KW"/>
</dbReference>
<dbReference type="GO" id="GO:0016887">
    <property type="term" value="F:ATP hydrolysis activity"/>
    <property type="evidence" value="ECO:0007669"/>
    <property type="project" value="RHEA"/>
</dbReference>
<dbReference type="GO" id="GO:0004197">
    <property type="term" value="F:cysteine-type endopeptidase activity"/>
    <property type="evidence" value="ECO:0007669"/>
    <property type="project" value="InterPro"/>
</dbReference>
<dbReference type="GO" id="GO:0046872">
    <property type="term" value="F:metal ion binding"/>
    <property type="evidence" value="ECO:0007669"/>
    <property type="project" value="UniProtKB-KW"/>
</dbReference>
<dbReference type="GO" id="GO:0008174">
    <property type="term" value="F:mRNA methyltransferase activity"/>
    <property type="evidence" value="ECO:0007669"/>
    <property type="project" value="InterPro"/>
</dbReference>
<dbReference type="GO" id="GO:0003723">
    <property type="term" value="F:RNA binding"/>
    <property type="evidence" value="ECO:0007669"/>
    <property type="project" value="InterPro"/>
</dbReference>
<dbReference type="GO" id="GO:0003724">
    <property type="term" value="F:RNA helicase activity"/>
    <property type="evidence" value="ECO:0007669"/>
    <property type="project" value="UniProtKB-EC"/>
</dbReference>
<dbReference type="GO" id="GO:0003968">
    <property type="term" value="F:RNA-directed RNA polymerase activity"/>
    <property type="evidence" value="ECO:0007669"/>
    <property type="project" value="UniProtKB-KW"/>
</dbReference>
<dbReference type="GO" id="GO:0006351">
    <property type="term" value="P:DNA-templated transcription"/>
    <property type="evidence" value="ECO:0007669"/>
    <property type="project" value="InterPro"/>
</dbReference>
<dbReference type="GO" id="GO:0016556">
    <property type="term" value="P:mRNA modification"/>
    <property type="evidence" value="ECO:0007669"/>
    <property type="project" value="InterPro"/>
</dbReference>
<dbReference type="GO" id="GO:0006508">
    <property type="term" value="P:proteolysis"/>
    <property type="evidence" value="ECO:0007669"/>
    <property type="project" value="UniProtKB-KW"/>
</dbReference>
<dbReference type="GO" id="GO:0006396">
    <property type="term" value="P:RNA processing"/>
    <property type="evidence" value="ECO:0007669"/>
    <property type="project" value="InterPro"/>
</dbReference>
<dbReference type="GO" id="GO:0039694">
    <property type="term" value="P:viral RNA genome replication"/>
    <property type="evidence" value="ECO:0007669"/>
    <property type="project" value="InterPro"/>
</dbReference>
<dbReference type="CDD" id="cd21557">
    <property type="entry name" value="Macro_X_Nsp3-like"/>
    <property type="match status" value="1"/>
</dbReference>
<dbReference type="CDD" id="cd23260">
    <property type="entry name" value="Matonaviridae_RdRp"/>
    <property type="match status" value="1"/>
</dbReference>
<dbReference type="Gene3D" id="3.40.220.10">
    <property type="entry name" value="Leucine Aminopeptidase, subunit E, domain 1"/>
    <property type="match status" value="1"/>
</dbReference>
<dbReference type="Gene3D" id="3.40.50.300">
    <property type="entry name" value="P-loop containing nucleotide triphosphate hydrolases"/>
    <property type="match status" value="1"/>
</dbReference>
<dbReference type="InterPro" id="IPR027351">
    <property type="entry name" value="(+)RNA_virus_helicase_core_dom"/>
</dbReference>
<dbReference type="InterPro" id="IPR002588">
    <property type="entry name" value="Alphavirus-like_MT_dom"/>
</dbReference>
<dbReference type="InterPro" id="IPR043502">
    <property type="entry name" value="DNA/RNA_pol_sf"/>
</dbReference>
<dbReference type="InterPro" id="IPR002589">
    <property type="entry name" value="Macro_dom"/>
</dbReference>
<dbReference type="InterPro" id="IPR043472">
    <property type="entry name" value="Macro_dom-like"/>
</dbReference>
<dbReference type="InterPro" id="IPR044371">
    <property type="entry name" value="Macro_X_NSP3-like"/>
</dbReference>
<dbReference type="InterPro" id="IPR047306">
    <property type="entry name" value="Matonaviridae_RdRp"/>
</dbReference>
<dbReference type="InterPro" id="IPR027417">
    <property type="entry name" value="P-loop_NTPase"/>
</dbReference>
<dbReference type="InterPro" id="IPR008738">
    <property type="entry name" value="Peptidase_C27"/>
</dbReference>
<dbReference type="InterPro" id="IPR001788">
    <property type="entry name" value="RNA-dep_RNA_pol_alsuvir"/>
</dbReference>
<dbReference type="InterPro" id="IPR007094">
    <property type="entry name" value="RNA-dir_pol_PSvirus"/>
</dbReference>
<dbReference type="InterPro" id="IPR022245">
    <property type="entry name" value="Rubi_NSP_C"/>
</dbReference>
<dbReference type="InterPro" id="IPR044070">
    <property type="entry name" value="RUBV_NS_PRO"/>
</dbReference>
<dbReference type="PANTHER" id="PTHR11106">
    <property type="entry name" value="GANGLIOSIDE INDUCED DIFFERENTIATION ASSOCIATED PROTEIN 2-RELATED"/>
    <property type="match status" value="1"/>
</dbReference>
<dbReference type="PANTHER" id="PTHR11106:SF27">
    <property type="entry name" value="MACRO DOMAIN-CONTAINING PROTEIN"/>
    <property type="match status" value="1"/>
</dbReference>
<dbReference type="Pfam" id="PF01661">
    <property type="entry name" value="Macro"/>
    <property type="match status" value="1"/>
</dbReference>
<dbReference type="Pfam" id="PF05407">
    <property type="entry name" value="Peptidase_C27"/>
    <property type="match status" value="1"/>
</dbReference>
<dbReference type="Pfam" id="PF00978">
    <property type="entry name" value="RdRP_2"/>
    <property type="match status" value="1"/>
</dbReference>
<dbReference type="Pfam" id="PF12601">
    <property type="entry name" value="Rubi_NSP_C"/>
    <property type="match status" value="1"/>
</dbReference>
<dbReference type="Pfam" id="PF01443">
    <property type="entry name" value="Viral_helicase1"/>
    <property type="match status" value="1"/>
</dbReference>
<dbReference type="SMART" id="SM00506">
    <property type="entry name" value="A1pp"/>
    <property type="match status" value="1"/>
</dbReference>
<dbReference type="SUPFAM" id="SSF56672">
    <property type="entry name" value="DNA/RNA polymerases"/>
    <property type="match status" value="1"/>
</dbReference>
<dbReference type="SUPFAM" id="SSF52949">
    <property type="entry name" value="Macro domain-like"/>
    <property type="match status" value="1"/>
</dbReference>
<dbReference type="SUPFAM" id="SSF52540">
    <property type="entry name" value="P-loop containing nucleoside triphosphate hydrolases"/>
    <property type="match status" value="1"/>
</dbReference>
<dbReference type="PROSITE" id="PS51743">
    <property type="entry name" value="ALPHAVIRUS_MT"/>
    <property type="match status" value="1"/>
</dbReference>
<dbReference type="PROSITE" id="PS51154">
    <property type="entry name" value="MACRO"/>
    <property type="match status" value="1"/>
</dbReference>
<dbReference type="PROSITE" id="PS51657">
    <property type="entry name" value="PSRV_HELICASE"/>
    <property type="match status" value="1"/>
</dbReference>
<dbReference type="PROSITE" id="PS50507">
    <property type="entry name" value="RDRP_SSRNA_POS"/>
    <property type="match status" value="1"/>
</dbReference>
<dbReference type="PROSITE" id="PS51889">
    <property type="entry name" value="RUBV_NS_PRO"/>
    <property type="match status" value="1"/>
</dbReference>